<name>ALKB3_HUMAN</name>
<reference key="1">
    <citation type="submission" date="2000-04" db="EMBL/GenBank/DDBJ databases">
        <title>Homo sapiens mRNA expressed in prostate cancer and thymus.</title>
        <authorList>
            <person name="Tsujikawa K."/>
            <person name="Konishi N."/>
            <person name="Ono Y."/>
            <person name="Ichijou T."/>
            <person name="Sakamoto K."/>
            <person name="Yamamoto H."/>
        </authorList>
    </citation>
    <scope>NUCLEOTIDE SEQUENCE [MRNA] (ISOFORM 1)</scope>
    <source>
        <tissue>Fetal thymus</tissue>
        <tissue>Prostatic carcinoma</tissue>
    </source>
</reference>
<reference key="2">
    <citation type="submission" date="2005-09" db="EMBL/GenBank/DDBJ databases">
        <authorList>
            <consortium name="NIEHS SNPs program"/>
        </authorList>
    </citation>
    <scope>NUCLEOTIDE SEQUENCE [GENOMIC DNA]</scope>
    <scope>VARIANTS CYS-164 AND GLU-228</scope>
</reference>
<reference key="3">
    <citation type="journal article" date="2006" name="Nature">
        <title>Human chromosome 11 DNA sequence and analysis including novel gene identification.</title>
        <authorList>
            <person name="Taylor T.D."/>
            <person name="Noguchi H."/>
            <person name="Totoki Y."/>
            <person name="Toyoda A."/>
            <person name="Kuroki Y."/>
            <person name="Dewar K."/>
            <person name="Lloyd C."/>
            <person name="Itoh T."/>
            <person name="Takeda T."/>
            <person name="Kim D.-W."/>
            <person name="She X."/>
            <person name="Barlow K.F."/>
            <person name="Bloom T."/>
            <person name="Bruford E."/>
            <person name="Chang J.L."/>
            <person name="Cuomo C.A."/>
            <person name="Eichler E."/>
            <person name="FitzGerald M.G."/>
            <person name="Jaffe D.B."/>
            <person name="LaButti K."/>
            <person name="Nicol R."/>
            <person name="Park H.-S."/>
            <person name="Seaman C."/>
            <person name="Sougnez C."/>
            <person name="Yang X."/>
            <person name="Zimmer A.R."/>
            <person name="Zody M.C."/>
            <person name="Birren B.W."/>
            <person name="Nusbaum C."/>
            <person name="Fujiyama A."/>
            <person name="Hattori M."/>
            <person name="Rogers J."/>
            <person name="Lander E.S."/>
            <person name="Sakaki Y."/>
        </authorList>
    </citation>
    <scope>NUCLEOTIDE SEQUENCE [LARGE SCALE GENOMIC DNA]</scope>
</reference>
<reference key="4">
    <citation type="submission" date="2005-09" db="EMBL/GenBank/DDBJ databases">
        <authorList>
            <person name="Mural R.J."/>
            <person name="Istrail S."/>
            <person name="Sutton G.G."/>
            <person name="Florea L."/>
            <person name="Halpern A.L."/>
            <person name="Mobarry C.M."/>
            <person name="Lippert R."/>
            <person name="Walenz B."/>
            <person name="Shatkay H."/>
            <person name="Dew I."/>
            <person name="Miller J.R."/>
            <person name="Flanigan M.J."/>
            <person name="Edwards N.J."/>
            <person name="Bolanos R."/>
            <person name="Fasulo D."/>
            <person name="Halldorsson B.V."/>
            <person name="Hannenhalli S."/>
            <person name="Turner R."/>
            <person name="Yooseph S."/>
            <person name="Lu F."/>
            <person name="Nusskern D.R."/>
            <person name="Shue B.C."/>
            <person name="Zheng X.H."/>
            <person name="Zhong F."/>
            <person name="Delcher A.L."/>
            <person name="Huson D.H."/>
            <person name="Kravitz S.A."/>
            <person name="Mouchard L."/>
            <person name="Reinert K."/>
            <person name="Remington K.A."/>
            <person name="Clark A.G."/>
            <person name="Waterman M.S."/>
            <person name="Eichler E.E."/>
            <person name="Adams M.D."/>
            <person name="Hunkapiller M.W."/>
            <person name="Myers E.W."/>
            <person name="Venter J.C."/>
        </authorList>
    </citation>
    <scope>NUCLEOTIDE SEQUENCE [LARGE SCALE GENOMIC DNA]</scope>
</reference>
<reference key="5">
    <citation type="journal article" date="2004" name="Genome Res.">
        <title>The status, quality, and expansion of the NIH full-length cDNA project: the Mammalian Gene Collection (MGC).</title>
        <authorList>
            <consortium name="The MGC Project Team"/>
        </authorList>
    </citation>
    <scope>NUCLEOTIDE SEQUENCE [LARGE SCALE MRNA] (ISOFORMS 1 AND 2)</scope>
    <scope>VARIANT GLU-228</scope>
    <source>
        <tissue>Lung</tissue>
        <tissue>PNS</tissue>
    </source>
</reference>
<reference key="6">
    <citation type="journal article" date="2002" name="Proc. Natl. Acad. Sci. U.S.A.">
        <title>Reversal of DNA alkylation damage by two human dioxygenases.</title>
        <authorList>
            <person name="Duncan T."/>
            <person name="Trewick S.C."/>
            <person name="Koivisto P."/>
            <person name="Bates P.A."/>
            <person name="Lindahl T."/>
            <person name="Sedgwick B."/>
        </authorList>
    </citation>
    <scope>FUNCTION</scope>
    <scope>CATALYTIC ACTIVITY</scope>
    <scope>ACTIVITY REGULATION</scope>
    <scope>SUBCELLULAR LOCATION</scope>
    <scope>TISSUE SPECIFICITY</scope>
</reference>
<reference key="7">
    <citation type="journal article" date="2003" name="Nature">
        <title>Human and bacterial oxidative demethylases repair alkylation damage in both RNA and DNA.</title>
        <authorList>
            <person name="Aas P.A."/>
            <person name="Otterlei M."/>
            <person name="Falnes P.O."/>
            <person name="Vaagboe C.B."/>
            <person name="Skorpen F."/>
            <person name="Akbari M."/>
            <person name="Sundheim O."/>
            <person name="Bjoeraas M."/>
            <person name="Slupphaug G."/>
            <person name="Seeberg E."/>
            <person name="Krokan H.E."/>
        </authorList>
    </citation>
    <scope>FUNCTION</scope>
    <scope>SUBCELLULAR LOCATION</scope>
</reference>
<reference key="8">
    <citation type="journal article" date="2005" name="J. Biol. Chem.">
        <title>Repair of methylation damage in DNA and RNA by mammalian AlkB homologues.</title>
        <authorList>
            <person name="Lee D.-H."/>
            <person name="Jin S.-G."/>
            <person name="Cai S."/>
            <person name="Chen Y."/>
            <person name="Pfeifer G.P."/>
            <person name="O'Connor T.R."/>
        </authorList>
    </citation>
    <scope>FUNCTION</scope>
    <scope>CATALYTIC ACTIVITY</scope>
    <scope>BIOPHYSICOCHEMICAL PROPERTIES</scope>
    <scope>MUTAGENESIS OF ASP-193 AND HIS-257</scope>
    <scope>TISSUE SPECIFICITY</scope>
</reference>
<reference key="9">
    <citation type="journal article" date="2007" name="J. Cell. Mol. Med.">
        <title>Expression and sub-cellular localization of human ABH family molecules.</title>
        <authorList>
            <person name="Tsujikawa K."/>
            <person name="Koike K."/>
            <person name="Kitae K."/>
            <person name="Shinkawa A."/>
            <person name="Arima H."/>
            <person name="Suzuki T."/>
            <person name="Tsuchiya M."/>
            <person name="Makino Y."/>
            <person name="Furukawa T."/>
            <person name="Konishi N."/>
            <person name="Yamamoto H."/>
        </authorList>
    </citation>
    <scope>SUBCELLULAR LOCATION</scope>
    <scope>TISSUE SPECIFICITY</scope>
</reference>
<reference key="10">
    <citation type="journal article" date="2010" name="Mol. Biosyst.">
        <title>Mechanistic insight into the recognition of single-stranded and double-stranded DNA substrates by ABH2 and ABH3.</title>
        <authorList>
            <person name="Chen B."/>
            <person name="Liu H."/>
            <person name="Sun X."/>
            <person name="Yang C.G."/>
        </authorList>
    </citation>
    <scope>FUNCTION</scope>
    <scope>CATALYTIC ACTIVITY</scope>
    <scope>MUTAGENESIS OF 122-ARG--ASP-124</scope>
</reference>
<reference key="11">
    <citation type="journal article" date="2011" name="Mol. Cell">
        <title>DNA unwinding by ASCC3 helicase is coupled to ALKBH3-dependent DNA alkylation repair and cancer cell proliferation.</title>
        <authorList>
            <person name="Dango S."/>
            <person name="Mosammaparast N."/>
            <person name="Sowa M.E."/>
            <person name="Xiong L.J."/>
            <person name="Wu F."/>
            <person name="Park K."/>
            <person name="Rubin M."/>
            <person name="Gygi S."/>
            <person name="Harper J.W."/>
            <person name="Shi Y."/>
        </authorList>
    </citation>
    <scope>FUNCTION</scope>
    <scope>CATALYTIC ACTIVITY</scope>
    <scope>INTERACTION WITH ASCC3</scope>
    <scope>MUTAGENESIS OF HIS-257</scope>
</reference>
<reference key="12">
    <citation type="journal article" date="2015" name="DNA Repair">
        <title>Differential repair of etheno-DNA adducts by bacterial and human AlkB proteins.</title>
        <authorList>
            <person name="Zdzalik D."/>
            <person name="Domanska A."/>
            <person name="Prorok P."/>
            <person name="Kosicki K."/>
            <person name="van den Born E."/>
            <person name="Falnes P.O."/>
            <person name="Rizzo C.J."/>
            <person name="Guengerich F.P."/>
            <person name="Tudek B."/>
        </authorList>
    </citation>
    <scope>FUNCTION</scope>
    <scope>CATALYTIC ACTIVITY</scope>
</reference>
<reference key="13">
    <citation type="journal article" date="2016" name="Nature">
        <title>The dynamic N(1)-methyladenosine methylome in eukaryotic messenger RNA.</title>
        <authorList>
            <person name="Dominissini D."/>
            <person name="Nachtergaele S."/>
            <person name="Moshitch-Moshkovitz S."/>
            <person name="Peer E."/>
            <person name="Kol N."/>
            <person name="Ben-Haim M.S."/>
            <person name="Dai Q."/>
            <person name="Di Segni A."/>
            <person name="Salmon-Divon M."/>
            <person name="Clark W.C."/>
            <person name="Zheng G."/>
            <person name="Pan T."/>
            <person name="Solomon O."/>
            <person name="Eyal E."/>
            <person name="Hershkovitz V."/>
            <person name="Han D."/>
            <person name="Dore L.C."/>
            <person name="Amariglio N."/>
            <person name="Rechavi G."/>
            <person name="He C."/>
        </authorList>
    </citation>
    <scope>FUNCTION</scope>
    <scope>MUTAGENESIS OF ASP-193</scope>
</reference>
<reference key="14">
    <citation type="journal article" date="2015" name="EMBO J.">
        <title>Noncanonical regulation of alkylation damage resistance by the OTUD4 deubiquitinase.</title>
        <authorList>
            <person name="Zhao Y."/>
            <person name="Majid M.C."/>
            <person name="Soll J.M."/>
            <person name="Brickner J.R."/>
            <person name="Dango S."/>
            <person name="Mosammaparast N."/>
        </authorList>
    </citation>
    <scope>FUNCTION</scope>
    <scope>UBIQUITINATION</scope>
    <scope>INTERACTION WITH OTUD4; USP7 AND USP9X</scope>
</reference>
<reference key="15">
    <citation type="journal article" date="2016" name="Nat. Chem. Biol.">
        <title>Transcriptome-wide mapping reveals reversible and dynamic N(1)-methyladenosine methylome.</title>
        <authorList>
            <person name="Li X."/>
            <person name="Xiong X."/>
            <person name="Wang K."/>
            <person name="Wang L."/>
            <person name="Shu X."/>
            <person name="Ma S."/>
            <person name="Yi C."/>
        </authorList>
    </citation>
    <scope>FUNCTION</scope>
</reference>
<reference key="16">
    <citation type="journal article" date="2017" name="Nature">
        <title>A ubiquitin-dependent signalling axis specific for ALKBH-mediated DNA dealkylation repair.</title>
        <authorList>
            <person name="Brickner J.R."/>
            <person name="Soll J.M."/>
            <person name="Lombardi P.M."/>
            <person name="Vaagboe C.B."/>
            <person name="Mudge M.C."/>
            <person name="Oyeniran C."/>
            <person name="Rabe R."/>
            <person name="Jackson J."/>
            <person name="Sullender M.E."/>
            <person name="Blazosky E."/>
            <person name="Byrum A.K."/>
            <person name="Zhao Y."/>
            <person name="Corbett M.A."/>
            <person name="Gecz J."/>
            <person name="Field M."/>
            <person name="Vindigni A."/>
            <person name="Slupphaug G."/>
            <person name="Wolberger C."/>
            <person name="Mosammaparast N."/>
        </authorList>
    </citation>
    <scope>INTERACTION WITH ASCC3 AND THE ASCC COMPLEX</scope>
    <scope>SUBCELLULAR LOCATION</scope>
</reference>
<reference key="17">
    <citation type="journal article" date="2006" name="EMBO J.">
        <title>Human ABH3 structure and key residues for oxidative demethylation to reverse DNA/RNA damage.</title>
        <authorList>
            <person name="Sundheim O."/>
            <person name="Vaagboe C.B."/>
            <person name="Bjoeraas M."/>
            <person name="Sousa M.M.L."/>
            <person name="Talstad V."/>
            <person name="Aas P.A."/>
            <person name="Drabloes F."/>
            <person name="Krokan H.E."/>
            <person name="Tainer J.A."/>
            <person name="Slupphaug G."/>
        </authorList>
    </citation>
    <scope>X-RAY CRYSTALLOGRAPHY (1.5 ANGSTROMS) OF 70-286 IN COMPLEX WITH ALPHA-KETOGLUTARATE AND IRON</scope>
    <scope>COFACTOR</scope>
    <scope>CATALYTIC ACTIVITY</scope>
    <scope>FUNCTION</scope>
    <scope>IDENTIFICATION BY MASS SPECTROMETRY</scope>
    <scope>HYDROXYLATION AT LEU-177</scope>
    <scope>OXIDATION AT LEU-177</scope>
    <scope>MUTAGENESIS OF ARG-122; GLU-123; ARG-131; LEU-177; ASN-179; TYR-181; ASP-189; HIS-191; ASP-193; HIS-257; ARG-269; ASN-271 AND ARG-275</scope>
</reference>
<comment type="function">
    <text evidence="4 5 7 8 11 12 13 14 15">Dioxygenase that mediates demethylation of DNA and RNA containing 1-methyladenosine (m1A) (PubMed:12486230, PubMed:12594517, PubMed:16174769, PubMed:26863196, PubMed:26863410). Repairs alkylated DNA containing 1-methyladenosine (m1A) and 3-methylcytosine (m3C) by oxidative demethylation (PubMed:12486230, PubMed:12594517, PubMed:16174769, PubMed:25944111). Has a strong preference for single-stranded DNA (PubMed:12486230, PubMed:12594517, PubMed:16174769, PubMed:20714506). Able to process alkylated m3C within double-stranded regions via its interaction with ASCC3, which promotes DNA unwinding to generate single-stranded substrate needed for ALKBH3 (PubMed:22055184). Can repair exocyclic 3,N4-ethenocytosine adducs in single-stranded DNA (PubMed:25797601). Also acts on RNA (PubMed:12594517, PubMed:16174769, PubMed:16858410, PubMed:26863196, PubMed:26863410). Demethylates N(1)-methyladenosine (m1A) RNA, an epigenetic internal modification of messenger RNAs (mRNAs) highly enriched within 5'-untranslated regions (UTRs) and in the vicinity of start codons (PubMed:26863196, PubMed:26863410). Requires molecular oxygen, alpha-ketoglutarate and iron (PubMed:16858410, PubMed:22055184).</text>
</comment>
<comment type="catalytic activity">
    <reaction evidence="28">
        <text>an N(1)-methyladenosine in mRNA + 2-oxoglutarate + O2 = an adenosine in mRNA + formaldehyde + succinate + CO2</text>
        <dbReference type="Rhea" id="RHEA:49516"/>
        <dbReference type="Rhea" id="RHEA-COMP:12414"/>
        <dbReference type="Rhea" id="RHEA-COMP:12415"/>
        <dbReference type="ChEBI" id="CHEBI:15379"/>
        <dbReference type="ChEBI" id="CHEBI:16526"/>
        <dbReference type="ChEBI" id="CHEBI:16810"/>
        <dbReference type="ChEBI" id="CHEBI:16842"/>
        <dbReference type="ChEBI" id="CHEBI:30031"/>
        <dbReference type="ChEBI" id="CHEBI:74411"/>
        <dbReference type="ChEBI" id="CHEBI:74491"/>
        <dbReference type="EC" id="1.14.11.54"/>
    </reaction>
</comment>
<comment type="catalytic activity">
    <reaction evidence="4 7 8 10 11">
        <text>a methylated nucleobase within DNA + 2-oxoglutarate + O2 = a nucleobase within DNA + formaldehyde + succinate + CO2</text>
        <dbReference type="Rhea" id="RHEA:30299"/>
        <dbReference type="Rhea" id="RHEA-COMP:12192"/>
        <dbReference type="Rhea" id="RHEA-COMP:12193"/>
        <dbReference type="ChEBI" id="CHEBI:15379"/>
        <dbReference type="ChEBI" id="CHEBI:16526"/>
        <dbReference type="ChEBI" id="CHEBI:16810"/>
        <dbReference type="ChEBI" id="CHEBI:16842"/>
        <dbReference type="ChEBI" id="CHEBI:30031"/>
        <dbReference type="ChEBI" id="CHEBI:32875"/>
        <dbReference type="ChEBI" id="CHEBI:64428"/>
        <dbReference type="EC" id="1.14.11.33"/>
    </reaction>
    <physiologicalReaction direction="left-to-right" evidence="22 23 24 25 26">
        <dbReference type="Rhea" id="RHEA:30300"/>
    </physiologicalReaction>
</comment>
<comment type="catalytic activity">
    <reaction evidence="4 7 8 10">
        <text>an N(1)-methyl-2'-deoxyadenosine in single-stranded DNA + 2-oxoglutarate + O2 = a 2'-deoxyadenosine in single-stranded DNA + formaldehyde + succinate + CO2 + H(+)</text>
        <dbReference type="Rhea" id="RHEA:70447"/>
        <dbReference type="Rhea" id="RHEA-COMP:17895"/>
        <dbReference type="Rhea" id="RHEA-COMP:17896"/>
        <dbReference type="ChEBI" id="CHEBI:15378"/>
        <dbReference type="ChEBI" id="CHEBI:15379"/>
        <dbReference type="ChEBI" id="CHEBI:16526"/>
        <dbReference type="ChEBI" id="CHEBI:16810"/>
        <dbReference type="ChEBI" id="CHEBI:16842"/>
        <dbReference type="ChEBI" id="CHEBI:30031"/>
        <dbReference type="ChEBI" id="CHEBI:90615"/>
        <dbReference type="ChEBI" id="CHEBI:139096"/>
    </reaction>
    <physiologicalReaction direction="left-to-right" evidence="22 23 24 25">
        <dbReference type="Rhea" id="RHEA:70448"/>
    </physiologicalReaction>
</comment>
<comment type="catalytic activity">
    <reaction evidence="4 7 11">
        <text>an N(3)-methyl-2'-deoxycytidine in single-stranded DNA + 2-oxoglutarate + O2 = a 2'-deoxycytidine in single-stranded DNA + formaldehyde + succinate + CO2 + H(+)</text>
        <dbReference type="Rhea" id="RHEA:70435"/>
        <dbReference type="Rhea" id="RHEA-COMP:12846"/>
        <dbReference type="Rhea" id="RHEA-COMP:17894"/>
        <dbReference type="ChEBI" id="CHEBI:15378"/>
        <dbReference type="ChEBI" id="CHEBI:15379"/>
        <dbReference type="ChEBI" id="CHEBI:16526"/>
        <dbReference type="ChEBI" id="CHEBI:16810"/>
        <dbReference type="ChEBI" id="CHEBI:16842"/>
        <dbReference type="ChEBI" id="CHEBI:30031"/>
        <dbReference type="ChEBI" id="CHEBI:85452"/>
        <dbReference type="ChEBI" id="CHEBI:139075"/>
    </reaction>
    <physiologicalReaction direction="left-to-right" evidence="22 23 26">
        <dbReference type="Rhea" id="RHEA:70436"/>
    </physiologicalReaction>
</comment>
<comment type="catalytic activity">
    <reaction evidence="12">
        <text>a 3,N(4)-etheno-2'-deoxycytidine in single-stranded DNA + 2-oxoglutarate + O2 + H2O = a 2'-deoxycytidine in single-stranded DNA + glyoxal + succinate + CO2</text>
        <dbReference type="Rhea" id="RHEA:70471"/>
        <dbReference type="Rhea" id="RHEA-COMP:12846"/>
        <dbReference type="Rhea" id="RHEA-COMP:17906"/>
        <dbReference type="ChEBI" id="CHEBI:15377"/>
        <dbReference type="ChEBI" id="CHEBI:15379"/>
        <dbReference type="ChEBI" id="CHEBI:16526"/>
        <dbReference type="ChEBI" id="CHEBI:16810"/>
        <dbReference type="ChEBI" id="CHEBI:30031"/>
        <dbReference type="ChEBI" id="CHEBI:34779"/>
        <dbReference type="ChEBI" id="CHEBI:85452"/>
        <dbReference type="ChEBI" id="CHEBI:189585"/>
    </reaction>
    <physiologicalReaction direction="left-to-right" evidence="27">
        <dbReference type="Rhea" id="RHEA:70472"/>
    </physiologicalReaction>
</comment>
<comment type="cofactor">
    <cofactor evidence="8">
        <name>Fe(2+)</name>
        <dbReference type="ChEBI" id="CHEBI:29033"/>
    </cofactor>
    <text evidence="8">Binds 1 Fe(2+) ion per subunit.</text>
</comment>
<comment type="activity regulation">
    <text evidence="4">Activated by ascorbate.</text>
</comment>
<comment type="biophysicochemical properties">
    <kinetics>
        <KM evidence="7">182 nM for N(1)-methyl-2'-deoxyadenosine in single-stranded DNA</KM>
        <KM evidence="7">263 nM for N(1)-methyl-2'-deoxyadenosine in double-stranded DNA</KM>
        <KM evidence="7">162 nM for N(3)-methyl-2'-deoxycytidine in single-stranded DNA</KM>
        <KM evidence="7">8.4 nM for N(3)-methyl-2'-deoxycytidine in double-stranded DNA</KM>
    </kinetics>
</comment>
<comment type="subunit">
    <text evidence="11 13 16">Interacts with the ASCC complex composed of ASCC1, ASCC2 and ASCC3 (PubMed:22055184, PubMed:29144457). Interacts directly with ASCC3, and is thereby recruited to the ASCC complex (PubMed:22055184, PubMed:29144457). Interacts with OTUD4; the interaction is direct (PubMed:25944111). Interacts with USP7 and USP9X (PubMed:25944111).</text>
</comment>
<comment type="interaction">
    <interactant intactId="EBI-6658697">
        <id>Q96Q83</id>
    </interactant>
    <interactant intactId="EBI-8466265">
        <id>Q96MA6</id>
        <label>AK8</label>
    </interactant>
    <organismsDiffer>false</organismsDiffer>
    <experiments>3</experiments>
</comment>
<comment type="interaction">
    <interactant intactId="EBI-6658697">
        <id>Q96Q83</id>
    </interactant>
    <interactant intactId="EBI-374781">
        <id>O76003</id>
        <label>GLRX3</label>
    </interactant>
    <organismsDiffer>false</organismsDiffer>
    <experiments>3</experiments>
</comment>
<comment type="interaction">
    <interactant intactId="EBI-6658697">
        <id>Q96Q83</id>
    </interactant>
    <interactant intactId="EBI-618309">
        <id>Q08379</id>
        <label>GOLGA2</label>
    </interactant>
    <organismsDiffer>false</organismsDiffer>
    <experiments>5</experiments>
</comment>
<comment type="interaction">
    <interactant intactId="EBI-6658697">
        <id>Q96Q83</id>
    </interactant>
    <interactant intactId="EBI-745305">
        <id>Q13422</id>
        <label>IKZF1</label>
    </interactant>
    <organismsDiffer>false</organismsDiffer>
    <experiments>5</experiments>
</comment>
<comment type="interaction">
    <interactant intactId="EBI-6658697">
        <id>Q96Q83</id>
    </interactant>
    <interactant intactId="EBI-739832">
        <id>Q8TBB1</id>
        <label>LNX1</label>
    </interactant>
    <organismsDiffer>false</organismsDiffer>
    <experiments>3</experiments>
</comment>
<comment type="interaction">
    <interactant intactId="EBI-9089544">
        <id>Q96Q83-2</id>
    </interactant>
    <interactant intactId="EBI-718729">
        <id>P55212</id>
        <label>CASP6</label>
    </interactant>
    <organismsDiffer>false</organismsDiffer>
    <experiments>3</experiments>
</comment>
<comment type="interaction">
    <interactant intactId="EBI-9089544">
        <id>Q96Q83-2</id>
    </interactant>
    <interactant intactId="EBI-21591415">
        <id>P13473-2</id>
        <label>LAMP2</label>
    </interactant>
    <organismsDiffer>false</organismsDiffer>
    <experiments>3</experiments>
</comment>
<comment type="interaction">
    <interactant intactId="EBI-9089544">
        <id>Q96Q83-2</id>
    </interactant>
    <interactant intactId="EBI-5280197">
        <id>O75400-2</id>
        <label>PRPF40A</label>
    </interactant>
    <organismsDiffer>false</organismsDiffer>
    <experiments>3</experiments>
</comment>
<comment type="interaction">
    <interactant intactId="EBI-9089544">
        <id>Q96Q83-2</id>
    </interactant>
    <interactant intactId="EBI-286642">
        <id>P62826</id>
        <label>RAN</label>
    </interactant>
    <organismsDiffer>false</organismsDiffer>
    <experiments>3</experiments>
</comment>
<comment type="interaction">
    <interactant intactId="EBI-9089544">
        <id>Q96Q83-2</id>
    </interactant>
    <interactant intactId="EBI-2623095">
        <id>Q9Y371</id>
        <label>SH3GLB1</label>
    </interactant>
    <organismsDiffer>false</organismsDiffer>
    <experiments>3</experiments>
</comment>
<comment type="subcellular location">
    <subcellularLocation>
        <location evidence="4 5 9 16">Nucleus</location>
    </subcellularLocation>
    <subcellularLocation>
        <location evidence="4 5 9">Cytoplasm</location>
    </subcellularLocation>
    <text evidence="4 5 9 16">Colocalizes with ASCC2 and ASCC3 in nuclear foci when cells have been exposed to alkylating agents that cause DNA damage (PubMed:29144457). Predominantly localizes to the nucleus.</text>
</comment>
<comment type="alternative products">
    <event type="alternative splicing"/>
    <isoform>
        <id>Q96Q83-1</id>
        <name>1</name>
        <sequence type="displayed"/>
    </isoform>
    <isoform>
        <id>Q96Q83-2</id>
        <name>2</name>
        <sequence type="described" ref="VSP_019125 VSP_019126 VSP_019127"/>
    </isoform>
</comment>
<comment type="tissue specificity">
    <text evidence="4 7 9">Ubiquitous. Detected in heart, pancreas, skeletal muscle, thymus, testis, ovary, spleen, prostate, small intestine, peripheral blood leukocytes, urinary bladder and colon.</text>
</comment>
<comment type="PTM">
    <text evidence="13">Ubiquitinated; undergoes 'Lys-48'-linked polyubiquitination. OTUD4 promotes USP7 and USP9X-dependent deubiquitination of 'Lys-48'-polyubiquitinated ALKBH3 promoting the repair of alkylated DNA lesions.</text>
</comment>
<comment type="similarity">
    <text evidence="21">Belongs to the alkB family.</text>
</comment>
<comment type="sequence caution" evidence="21">
    <conflict type="erroneous initiation">
        <sequence resource="EMBL-CDS" id="AAH15155"/>
    </conflict>
</comment>
<keyword id="KW-0002">3D-structure</keyword>
<keyword id="KW-0025">Alternative splicing</keyword>
<keyword id="KW-0963">Cytoplasm</keyword>
<keyword id="KW-0223">Dioxygenase</keyword>
<keyword id="KW-0227">DNA damage</keyword>
<keyword id="KW-0234">DNA repair</keyword>
<keyword id="KW-0379">Hydroxylation</keyword>
<keyword id="KW-0408">Iron</keyword>
<keyword id="KW-0479">Metal-binding</keyword>
<keyword id="KW-0539">Nucleus</keyword>
<keyword id="KW-0558">Oxidation</keyword>
<keyword id="KW-0560">Oxidoreductase</keyword>
<keyword id="KW-1267">Proteomics identification</keyword>
<keyword id="KW-1185">Reference proteome</keyword>
<keyword id="KW-0832">Ubl conjugation</keyword>
<keyword id="KW-0847">Vitamin C</keyword>
<sequence length="286" mass="33375">MEEKRRRARVQGAWAAPVKSQAIAQPATTAKSHLHQKPGQTWKNKEHHLSDREFVFKEPQQVVRRAPEPRVIDREGVYEISLSPTGVSRVCLYPGFVDVKEADWILEQLCQDVPWKQRTGIREDITYQQPRLTAWYGELPYTYSRITMEPNPHWHPVLRTLKNRIEENTGHTFNSLLCNLYRNEKDSVDWHSDDEPSLGRCPIIASLSFGATRTFEMRKKPPPEENGDYTYVERVKIPLDHGTLLIMEGATQADWQHRVPKEYHSREPRVNLTFRTVYPDPRGAPW</sequence>
<proteinExistence type="evidence at protein level"/>
<evidence type="ECO:0000250" key="1">
    <source>
        <dbReference type="UniProtKB" id="Q6NS38"/>
    </source>
</evidence>
<evidence type="ECO:0000255" key="2">
    <source>
        <dbReference type="PROSITE-ProRule" id="PRU00805"/>
    </source>
</evidence>
<evidence type="ECO:0000256" key="3">
    <source>
        <dbReference type="SAM" id="MobiDB-lite"/>
    </source>
</evidence>
<evidence type="ECO:0000269" key="4">
    <source>
    </source>
</evidence>
<evidence type="ECO:0000269" key="5">
    <source>
    </source>
</evidence>
<evidence type="ECO:0000269" key="6">
    <source>
    </source>
</evidence>
<evidence type="ECO:0000269" key="7">
    <source>
    </source>
</evidence>
<evidence type="ECO:0000269" key="8">
    <source>
    </source>
</evidence>
<evidence type="ECO:0000269" key="9">
    <source>
    </source>
</evidence>
<evidence type="ECO:0000269" key="10">
    <source>
    </source>
</evidence>
<evidence type="ECO:0000269" key="11">
    <source>
    </source>
</evidence>
<evidence type="ECO:0000269" key="12">
    <source>
    </source>
</evidence>
<evidence type="ECO:0000269" key="13">
    <source>
    </source>
</evidence>
<evidence type="ECO:0000269" key="14">
    <source>
    </source>
</evidence>
<evidence type="ECO:0000269" key="15">
    <source>
    </source>
</evidence>
<evidence type="ECO:0000269" key="16">
    <source>
    </source>
</evidence>
<evidence type="ECO:0000269" key="17">
    <source ref="2"/>
</evidence>
<evidence type="ECO:0000303" key="18">
    <source>
    </source>
</evidence>
<evidence type="ECO:0000303" key="19">
    <source>
    </source>
</evidence>
<evidence type="ECO:0000303" key="20">
    <source ref="1"/>
</evidence>
<evidence type="ECO:0000305" key="21"/>
<evidence type="ECO:0000305" key="22">
    <source>
    </source>
</evidence>
<evidence type="ECO:0000305" key="23">
    <source>
    </source>
</evidence>
<evidence type="ECO:0000305" key="24">
    <source>
    </source>
</evidence>
<evidence type="ECO:0000305" key="25">
    <source>
    </source>
</evidence>
<evidence type="ECO:0000305" key="26">
    <source>
    </source>
</evidence>
<evidence type="ECO:0000305" key="27">
    <source>
    </source>
</evidence>
<evidence type="ECO:0000305" key="28">
    <source>
    </source>
</evidence>
<evidence type="ECO:0000312" key="29">
    <source>
        <dbReference type="HGNC" id="HGNC:30141"/>
    </source>
</evidence>
<evidence type="ECO:0007744" key="30">
    <source>
        <dbReference type="PDB" id="2IUW"/>
    </source>
</evidence>
<evidence type="ECO:0007829" key="31">
    <source>
        <dbReference type="PDB" id="2IUW"/>
    </source>
</evidence>
<evidence type="ECO:0007829" key="32">
    <source>
        <dbReference type="PDB" id="8JNK"/>
    </source>
</evidence>
<feature type="chain" id="PRO_0000239278" description="Alpha-ketoglutarate-dependent dioxygenase alkB homolog 3">
    <location>
        <begin position="1"/>
        <end position="286"/>
    </location>
</feature>
<feature type="domain" description="Fe2OG dioxygenase" evidence="2">
    <location>
        <begin position="172"/>
        <end position="278"/>
    </location>
</feature>
<feature type="region of interest" description="Disordered" evidence="3">
    <location>
        <begin position="21"/>
        <end position="45"/>
    </location>
</feature>
<feature type="compositionally biased region" description="Polar residues" evidence="3">
    <location>
        <begin position="22"/>
        <end position="31"/>
    </location>
</feature>
<feature type="binding site" evidence="1">
    <location>
        <position position="115"/>
    </location>
    <ligand>
        <name>substrate</name>
    </ligand>
</feature>
<feature type="binding site" evidence="1">
    <location>
        <begin position="141"/>
        <end position="143"/>
    </location>
    <ligand>
        <name>substrate</name>
    </ligand>
</feature>
<feature type="binding site" evidence="8 30">
    <location>
        <begin position="179"/>
        <end position="181"/>
    </location>
    <ligand>
        <name>2-oxoglutarate</name>
        <dbReference type="ChEBI" id="CHEBI:16810"/>
    </ligand>
</feature>
<feature type="binding site" evidence="2 8 30">
    <location>
        <position position="191"/>
    </location>
    <ligand>
        <name>Fe cation</name>
        <dbReference type="ChEBI" id="CHEBI:24875"/>
        <note>catalytic</note>
    </ligand>
</feature>
<feature type="binding site" evidence="2 8 30">
    <location>
        <position position="193"/>
    </location>
    <ligand>
        <name>Fe cation</name>
        <dbReference type="ChEBI" id="CHEBI:24875"/>
        <note>catalytic</note>
    </ligand>
</feature>
<feature type="binding site" evidence="1">
    <location>
        <position position="194"/>
    </location>
    <ligand>
        <name>substrate</name>
    </ligand>
</feature>
<feature type="binding site" evidence="2 8 30">
    <location>
        <position position="257"/>
    </location>
    <ligand>
        <name>Fe cation</name>
        <dbReference type="ChEBI" id="CHEBI:24875"/>
        <note>catalytic</note>
    </ligand>
</feature>
<feature type="binding site" evidence="8 30">
    <location>
        <begin position="269"/>
        <end position="275"/>
    </location>
    <ligand>
        <name>2-oxoglutarate</name>
        <dbReference type="ChEBI" id="CHEBI:16810"/>
    </ligand>
</feature>
<feature type="binding site" evidence="8 30">
    <location>
        <position position="275"/>
    </location>
    <ligand>
        <name>2-oxoglutarate</name>
        <dbReference type="ChEBI" id="CHEBI:16810"/>
    </ligand>
</feature>
<feature type="modified residue" description="(4R)-5-hydroxyleucine; alternate" evidence="8">
    <location>
        <position position="177"/>
    </location>
</feature>
<feature type="modified residue" description="(4R)-5-oxoleucine; alternate" evidence="8">
    <location>
        <position position="177"/>
    </location>
</feature>
<feature type="splice variant" id="VSP_019125" description="In isoform 2." evidence="19">
    <original>DR</original>
    <variation>E</variation>
    <location>
        <begin position="73"/>
        <end position="74"/>
    </location>
</feature>
<feature type="splice variant" id="VSP_019126" description="In isoform 2." evidence="19">
    <original>ITYQQPRLTAWYGELPYTYSRITMEPNPHWHPVLRTLKNRIEENTGHT</original>
    <variation>SILQLTFKKSAPVSGTATAPQSCWYERPSPPHIPGPAILTRTRLWAP</variation>
    <location>
        <begin position="125"/>
        <end position="172"/>
    </location>
</feature>
<feature type="splice variant" id="VSP_019127" description="In isoform 2." evidence="19">
    <location>
        <begin position="173"/>
        <end position="286"/>
    </location>
</feature>
<feature type="sequence variant" id="VAR_026632" description="In dbSNP:rs2271815." evidence="17">
    <original>R</original>
    <variation>C</variation>
    <location>
        <position position="164"/>
    </location>
</feature>
<feature type="sequence variant" id="VAR_026631" description="In dbSNP:rs1130290." evidence="6 17">
    <original>D</original>
    <variation>E</variation>
    <location>
        <position position="228"/>
    </location>
</feature>
<feature type="mutagenesis site" description="Acquires the capacity to efficiently repair N1-methyladenine adduct in dsDNA." evidence="10">
    <original>RED</original>
    <variation>VGF</variation>
    <location>
        <begin position="122"/>
        <end position="124"/>
    </location>
</feature>
<feature type="mutagenesis site" description="Decreases activity towards ssDNA by 25%. Loss of activity towards dsDNA." evidence="8">
    <original>R</original>
    <variation>A</variation>
    <location>
        <position position="122"/>
    </location>
</feature>
<feature type="mutagenesis site" description="Strongly increases activity towards dsDNA, possibly by facilitating access to the active site." evidence="8">
    <original>E</original>
    <variation>A</variation>
    <location>
        <position position="123"/>
    </location>
</feature>
<feature type="mutagenesis site" description="Loss of activity." evidence="8">
    <original>R</original>
    <variation>A</variation>
    <location>
        <position position="131"/>
    </location>
</feature>
<feature type="mutagenesis site" description="Loss of activity against N1-methyladenine." evidence="8">
    <original>L</original>
    <variation>A</variation>
    <variation>N</variation>
    <location>
        <position position="177"/>
    </location>
</feature>
<feature type="mutagenesis site" description="Loss of activity." evidence="8">
    <original>L</original>
    <variation>E</variation>
    <variation>Q</variation>
    <location>
        <position position="177"/>
    </location>
</feature>
<feature type="mutagenesis site" description="Decreases activity against N1-methyladenine." evidence="8">
    <original>L</original>
    <variation>I</variation>
    <location>
        <position position="177"/>
    </location>
</feature>
<feature type="mutagenesis site" description="No effect." evidence="8">
    <original>L</original>
    <variation>M</variation>
    <location>
        <position position="177"/>
    </location>
</feature>
<feature type="mutagenesis site" description="Decreases activity by about 60%." evidence="8">
    <original>N</original>
    <variation>A</variation>
    <location>
        <position position="179"/>
    </location>
</feature>
<feature type="mutagenesis site" description="Strong decrease of activity." evidence="8">
    <original>Y</original>
    <variation>A</variation>
    <location>
        <position position="181"/>
    </location>
</feature>
<feature type="mutagenesis site" description="Strongly increases activity towards dsDNA, possibly by facilitating access to the active site." evidence="8">
    <original>D</original>
    <variation>A</variation>
    <location>
        <position position="189"/>
    </location>
</feature>
<feature type="mutagenesis site" description="Loss of activity." evidence="8">
    <original>H</original>
    <variation>A</variation>
    <location>
        <position position="191"/>
    </location>
</feature>
<feature type="mutagenesis site" description="Loss of activity." evidence="7 14">
    <original>D</original>
    <variation>A</variation>
    <location>
        <position position="193"/>
    </location>
</feature>
<feature type="mutagenesis site" description="Decreases activity by about 65%." evidence="7 11">
    <original>H</original>
    <variation>A</variation>
    <location>
        <position position="257"/>
    </location>
</feature>
<feature type="mutagenesis site" description="Strong decrease of activity." evidence="8">
    <original>R</original>
    <variation>A</variation>
    <location>
        <position position="269"/>
    </location>
</feature>
<feature type="mutagenesis site" description="No effect." evidence="8">
    <original>N</original>
    <variation>A</variation>
    <location>
        <position position="271"/>
    </location>
</feature>
<feature type="mutagenesis site" description="Loss of activity." evidence="8">
    <original>R</original>
    <variation>A</variation>
    <location>
        <position position="275"/>
    </location>
</feature>
<feature type="strand" evidence="31">
    <location>
        <begin position="69"/>
        <end position="71"/>
    </location>
</feature>
<feature type="strand" evidence="31">
    <location>
        <begin position="74"/>
        <end position="81"/>
    </location>
</feature>
<feature type="strand" evidence="31">
    <location>
        <begin position="84"/>
        <end position="86"/>
    </location>
</feature>
<feature type="strand" evidence="31">
    <location>
        <begin position="88"/>
        <end position="93"/>
    </location>
</feature>
<feature type="helix" evidence="31">
    <location>
        <begin position="99"/>
        <end position="112"/>
    </location>
</feature>
<feature type="strand" evidence="31">
    <location>
        <begin position="119"/>
        <end position="124"/>
    </location>
</feature>
<feature type="strand" evidence="31">
    <location>
        <begin position="126"/>
        <end position="128"/>
    </location>
</feature>
<feature type="strand" evidence="31">
    <location>
        <begin position="130"/>
        <end position="137"/>
    </location>
</feature>
<feature type="strand" evidence="32">
    <location>
        <begin position="141"/>
        <end position="143"/>
    </location>
</feature>
<feature type="helix" evidence="31">
    <location>
        <begin position="145"/>
        <end position="148"/>
    </location>
</feature>
<feature type="strand" evidence="31">
    <location>
        <begin position="151"/>
        <end position="153"/>
    </location>
</feature>
<feature type="helix" evidence="31">
    <location>
        <begin position="156"/>
        <end position="169"/>
    </location>
</feature>
<feature type="strand" evidence="31">
    <location>
        <begin position="175"/>
        <end position="181"/>
    </location>
</feature>
<feature type="strand" evidence="31">
    <location>
        <begin position="188"/>
        <end position="191"/>
    </location>
</feature>
<feature type="helix" evidence="31">
    <location>
        <begin position="196"/>
        <end position="198"/>
    </location>
</feature>
<feature type="strand" evidence="31">
    <location>
        <begin position="204"/>
        <end position="211"/>
    </location>
</feature>
<feature type="strand" evidence="31">
    <location>
        <begin position="213"/>
        <end position="219"/>
    </location>
</feature>
<feature type="strand" evidence="31">
    <location>
        <begin position="234"/>
        <end position="239"/>
    </location>
</feature>
<feature type="strand" evidence="31">
    <location>
        <begin position="244"/>
        <end position="249"/>
    </location>
</feature>
<feature type="helix" evidence="31">
    <location>
        <begin position="251"/>
        <end position="254"/>
    </location>
</feature>
<feature type="strand" evidence="31">
    <location>
        <begin position="255"/>
        <end position="259"/>
    </location>
</feature>
<feature type="strand" evidence="31">
    <location>
        <begin position="269"/>
        <end position="275"/>
    </location>
</feature>
<dbReference type="EC" id="1.14.11.33" evidence="4 7 8 10 11"/>
<dbReference type="EC" id="1.14.11.54" evidence="11 28"/>
<dbReference type="EMBL" id="AB042029">
    <property type="protein sequence ID" value="BAB70508.1"/>
    <property type="molecule type" value="mRNA"/>
</dbReference>
<dbReference type="EMBL" id="DQ196343">
    <property type="protein sequence ID" value="ABA27096.1"/>
    <property type="molecule type" value="Genomic_DNA"/>
</dbReference>
<dbReference type="EMBL" id="AC087521">
    <property type="status" value="NOT_ANNOTATED_CDS"/>
    <property type="molecule type" value="Genomic_DNA"/>
</dbReference>
<dbReference type="EMBL" id="CH471064">
    <property type="protein sequence ID" value="EAW68078.1"/>
    <property type="molecule type" value="Genomic_DNA"/>
</dbReference>
<dbReference type="EMBL" id="BC015155">
    <property type="protein sequence ID" value="AAH15155.1"/>
    <property type="status" value="ALT_INIT"/>
    <property type="molecule type" value="mRNA"/>
</dbReference>
<dbReference type="EMBL" id="BC103812">
    <property type="protein sequence ID" value="AAI03813.1"/>
    <property type="molecule type" value="mRNA"/>
</dbReference>
<dbReference type="EMBL" id="BC103813">
    <property type="protein sequence ID" value="AAI03814.1"/>
    <property type="molecule type" value="mRNA"/>
</dbReference>
<dbReference type="EMBL" id="BC103814">
    <property type="protein sequence ID" value="AAI03815.1"/>
    <property type="molecule type" value="mRNA"/>
</dbReference>
<dbReference type="EMBL" id="BC067257">
    <property type="protein sequence ID" value="AAH67257.1"/>
    <property type="molecule type" value="mRNA"/>
</dbReference>
<dbReference type="CCDS" id="CCDS7906.1">
    <molecule id="Q96Q83-1"/>
</dbReference>
<dbReference type="RefSeq" id="NP_631917.1">
    <molecule id="Q96Q83-1"/>
    <property type="nucleotide sequence ID" value="NM_139178.4"/>
</dbReference>
<dbReference type="PDB" id="2IUW">
    <property type="method" value="X-ray"/>
    <property type="resolution" value="1.50 A"/>
    <property type="chains" value="A=70-286"/>
</dbReference>
<dbReference type="PDB" id="8JNK">
    <property type="method" value="X-ray"/>
    <property type="resolution" value="2.69 A"/>
    <property type="chains" value="A/C/E/G=70-280"/>
</dbReference>
<dbReference type="PDB" id="8JNR">
    <property type="method" value="X-ray"/>
    <property type="resolution" value="3.66 A"/>
    <property type="chains" value="A/C/D/E=70-286"/>
</dbReference>
<dbReference type="PDB" id="9NCZ">
    <property type="method" value="X-ray"/>
    <property type="resolution" value="1.97 A"/>
    <property type="chains" value="A=65-286"/>
</dbReference>
<dbReference type="PDBsum" id="2IUW"/>
<dbReference type="PDBsum" id="8JNK"/>
<dbReference type="PDBsum" id="8JNR"/>
<dbReference type="PDBsum" id="9NCZ"/>
<dbReference type="SMR" id="Q96Q83"/>
<dbReference type="BioGRID" id="128686">
    <property type="interactions" value="55"/>
</dbReference>
<dbReference type="FunCoup" id="Q96Q83">
    <property type="interactions" value="2324"/>
</dbReference>
<dbReference type="IntAct" id="Q96Q83">
    <property type="interactions" value="21"/>
</dbReference>
<dbReference type="STRING" id="9606.ENSP00000302232"/>
<dbReference type="BindingDB" id="Q96Q83"/>
<dbReference type="ChEMBL" id="CHEMBL3112376"/>
<dbReference type="DrugBank" id="DB00126">
    <property type="generic name" value="Ascorbic acid"/>
</dbReference>
<dbReference type="GlyGen" id="Q96Q83">
    <property type="glycosylation" value="1 site, 1 O-linked glycan (1 site)"/>
</dbReference>
<dbReference type="iPTMnet" id="Q96Q83"/>
<dbReference type="PhosphoSitePlus" id="Q96Q83"/>
<dbReference type="BioMuta" id="ALKBH3"/>
<dbReference type="DMDM" id="74752087"/>
<dbReference type="jPOST" id="Q96Q83"/>
<dbReference type="MassIVE" id="Q96Q83"/>
<dbReference type="PaxDb" id="9606-ENSP00000302232"/>
<dbReference type="PeptideAtlas" id="Q96Q83"/>
<dbReference type="ProteomicsDB" id="77836">
    <molecule id="Q96Q83-1"/>
</dbReference>
<dbReference type="ProteomicsDB" id="77837">
    <molecule id="Q96Q83-2"/>
</dbReference>
<dbReference type="Pumba" id="Q96Q83"/>
<dbReference type="Antibodypedia" id="1876">
    <property type="antibodies" value="259 antibodies from 32 providers"/>
</dbReference>
<dbReference type="DNASU" id="221120"/>
<dbReference type="Ensembl" id="ENST00000302708.9">
    <molecule id="Q96Q83-1"/>
    <property type="protein sequence ID" value="ENSP00000302232.4"/>
    <property type="gene ID" value="ENSG00000166199.13"/>
</dbReference>
<dbReference type="Ensembl" id="ENST00000530803.5">
    <molecule id="Q96Q83-2"/>
    <property type="protein sequence ID" value="ENSP00000436788.1"/>
    <property type="gene ID" value="ENSG00000166199.13"/>
</dbReference>
<dbReference type="GeneID" id="221120"/>
<dbReference type="KEGG" id="hsa:221120"/>
<dbReference type="MANE-Select" id="ENST00000302708.9">
    <property type="protein sequence ID" value="ENSP00000302232.4"/>
    <property type="RefSeq nucleotide sequence ID" value="NM_139178.4"/>
    <property type="RefSeq protein sequence ID" value="NP_631917.1"/>
</dbReference>
<dbReference type="UCSC" id="uc001mxs.3">
    <molecule id="Q96Q83-1"/>
    <property type="organism name" value="human"/>
</dbReference>
<dbReference type="AGR" id="HGNC:30141"/>
<dbReference type="CTD" id="221120"/>
<dbReference type="DisGeNET" id="221120"/>
<dbReference type="GeneCards" id="ALKBH3"/>
<dbReference type="HGNC" id="HGNC:30141">
    <property type="gene designation" value="ALKBH3"/>
</dbReference>
<dbReference type="HPA" id="ENSG00000166199">
    <property type="expression patterns" value="Low tissue specificity"/>
</dbReference>
<dbReference type="MIM" id="610603">
    <property type="type" value="gene"/>
</dbReference>
<dbReference type="neXtProt" id="NX_Q96Q83"/>
<dbReference type="OpenTargets" id="ENSG00000166199"/>
<dbReference type="PharmGKB" id="PA143485293"/>
<dbReference type="VEuPathDB" id="HostDB:ENSG00000166199"/>
<dbReference type="eggNOG" id="ENOG502QW9E">
    <property type="taxonomic scope" value="Eukaryota"/>
</dbReference>
<dbReference type="GeneTree" id="ENSGT00940000157226"/>
<dbReference type="HOGENOM" id="CLU_048788_2_1_1"/>
<dbReference type="InParanoid" id="Q96Q83"/>
<dbReference type="OMA" id="FEFHQPT"/>
<dbReference type="OrthoDB" id="545910at2759"/>
<dbReference type="PAN-GO" id="Q96Q83">
    <property type="GO annotations" value="1 GO annotation based on evolutionary models"/>
</dbReference>
<dbReference type="PhylomeDB" id="Q96Q83"/>
<dbReference type="TreeFam" id="TF331732"/>
<dbReference type="BRENDA" id="1.14.11.33">
    <property type="organism ID" value="2681"/>
</dbReference>
<dbReference type="BRENDA" id="1.14.11.54">
    <property type="organism ID" value="2681"/>
</dbReference>
<dbReference type="PathwayCommons" id="Q96Q83"/>
<dbReference type="Reactome" id="R-HSA-112126">
    <property type="pathway name" value="ALKBH3 mediated reversal of alkylation damage"/>
</dbReference>
<dbReference type="SignaLink" id="Q96Q83"/>
<dbReference type="BioGRID-ORCS" id="221120">
    <property type="hits" value="18 hits in 1164 CRISPR screens"/>
</dbReference>
<dbReference type="ChiTaRS" id="ALKBH3">
    <property type="organism name" value="human"/>
</dbReference>
<dbReference type="EvolutionaryTrace" id="Q96Q83"/>
<dbReference type="GenomeRNAi" id="221120"/>
<dbReference type="Pharos" id="Q96Q83">
    <property type="development level" value="Tchem"/>
</dbReference>
<dbReference type="PRO" id="PR:Q96Q83"/>
<dbReference type="Proteomes" id="UP000005640">
    <property type="component" value="Chromosome 11"/>
</dbReference>
<dbReference type="RNAct" id="Q96Q83">
    <property type="molecule type" value="protein"/>
</dbReference>
<dbReference type="Bgee" id="ENSG00000166199">
    <property type="expression patterns" value="Expressed in right uterine tube and 152 other cell types or tissues"/>
</dbReference>
<dbReference type="ExpressionAtlas" id="Q96Q83">
    <property type="expression patterns" value="baseline and differential"/>
</dbReference>
<dbReference type="GO" id="GO:0005829">
    <property type="term" value="C:cytosol"/>
    <property type="evidence" value="ECO:0000314"/>
    <property type="project" value="HPA"/>
</dbReference>
<dbReference type="GO" id="GO:0005739">
    <property type="term" value="C:mitochondrion"/>
    <property type="evidence" value="ECO:0000314"/>
    <property type="project" value="HPA"/>
</dbReference>
<dbReference type="GO" id="GO:0005654">
    <property type="term" value="C:nucleoplasm"/>
    <property type="evidence" value="ECO:0000314"/>
    <property type="project" value="HPA"/>
</dbReference>
<dbReference type="GO" id="GO:0035516">
    <property type="term" value="F:broad specificity oxidative DNA demethylase activity"/>
    <property type="evidence" value="ECO:0000314"/>
    <property type="project" value="UniProtKB"/>
</dbReference>
<dbReference type="GO" id="GO:0008198">
    <property type="term" value="F:ferrous iron binding"/>
    <property type="evidence" value="ECO:0000314"/>
    <property type="project" value="UniProtKB"/>
</dbReference>
<dbReference type="GO" id="GO:0031418">
    <property type="term" value="F:L-ascorbic acid binding"/>
    <property type="evidence" value="ECO:0007669"/>
    <property type="project" value="UniProtKB-KW"/>
</dbReference>
<dbReference type="GO" id="GO:1990930">
    <property type="term" value="F:mRNA N1-methyladenosine dioxygenase activity"/>
    <property type="evidence" value="ECO:0000314"/>
    <property type="project" value="UniProtKB"/>
</dbReference>
<dbReference type="GO" id="GO:0035515">
    <property type="term" value="F:oxidative RNA demethylase activity"/>
    <property type="evidence" value="ECO:0000314"/>
    <property type="project" value="UniProtKB"/>
</dbReference>
<dbReference type="GO" id="GO:0008283">
    <property type="term" value="P:cell population proliferation"/>
    <property type="evidence" value="ECO:0000315"/>
    <property type="project" value="UniProtKB"/>
</dbReference>
<dbReference type="GO" id="GO:0006307">
    <property type="term" value="P:DNA alkylation repair"/>
    <property type="evidence" value="ECO:0000314"/>
    <property type="project" value="UniProtKB"/>
</dbReference>
<dbReference type="GO" id="GO:0006281">
    <property type="term" value="P:DNA repair"/>
    <property type="evidence" value="ECO:0000318"/>
    <property type="project" value="GO_Central"/>
</dbReference>
<dbReference type="GO" id="GO:2000766">
    <property type="term" value="P:negative regulation of cytoplasmic translation"/>
    <property type="evidence" value="ECO:0000314"/>
    <property type="project" value="UniProtKB"/>
</dbReference>
<dbReference type="FunFam" id="2.60.120.590:FF:000003">
    <property type="entry name" value="alpha-ketoglutarate-dependent dioxygenase alkB homolog 3"/>
    <property type="match status" value="1"/>
</dbReference>
<dbReference type="Gene3D" id="2.60.120.590">
    <property type="entry name" value="Alpha-ketoglutarate-dependent dioxygenase AlkB-like"/>
    <property type="match status" value="1"/>
</dbReference>
<dbReference type="InterPro" id="IPR027450">
    <property type="entry name" value="AlkB-like"/>
</dbReference>
<dbReference type="InterPro" id="IPR037151">
    <property type="entry name" value="AlkB-like_sf"/>
</dbReference>
<dbReference type="InterPro" id="IPR032854">
    <property type="entry name" value="ALKBH3"/>
</dbReference>
<dbReference type="InterPro" id="IPR005123">
    <property type="entry name" value="Oxoglu/Fe-dep_dioxygenase_dom"/>
</dbReference>
<dbReference type="PANTHER" id="PTHR31212">
    <property type="entry name" value="ALPHA-KETOGLUTARATE-DEPENDENT DIOXYGENASE ALKB HOMOLOG 3"/>
    <property type="match status" value="1"/>
</dbReference>
<dbReference type="PANTHER" id="PTHR31212:SF4">
    <property type="entry name" value="ALPHA-KETOGLUTARATE-DEPENDENT DIOXYGENASE ALKB HOMOLOG 3"/>
    <property type="match status" value="1"/>
</dbReference>
<dbReference type="Pfam" id="PF13532">
    <property type="entry name" value="2OG-FeII_Oxy_2"/>
    <property type="match status" value="1"/>
</dbReference>
<dbReference type="SUPFAM" id="SSF51197">
    <property type="entry name" value="Clavaminate synthase-like"/>
    <property type="match status" value="1"/>
</dbReference>
<dbReference type="PROSITE" id="PS51471">
    <property type="entry name" value="FE2OG_OXY"/>
    <property type="match status" value="1"/>
</dbReference>
<accession>Q96Q83</accession>
<accession>A6NDJ1</accession>
<accession>Q3SYI0</accession>
<accession>Q6NX57</accession>
<accession>Q96BU8</accession>
<gene>
    <name evidence="29" type="primary">ALKBH3</name>
    <name evidence="18" type="synonym">ABH3</name>
    <name evidence="20" type="synonym">DEPC1</name>
</gene>
<protein>
    <recommendedName>
        <fullName evidence="21">Alpha-ketoglutarate-dependent dioxygenase alkB homolog 3</fullName>
        <ecNumber evidence="4 7 8 10 11">1.14.11.33</ecNumber>
        <ecNumber evidence="11 28">1.14.11.54</ecNumber>
    </recommendedName>
    <alternativeName>
        <fullName evidence="18">Alkylated DNA repair protein alkB homolog 3</fullName>
        <shortName evidence="18">hABH3</shortName>
    </alternativeName>
    <alternativeName>
        <fullName evidence="20">DEPC-1</fullName>
    </alternativeName>
    <alternativeName>
        <fullName evidence="20">Prostate cancer antigen 1</fullName>
    </alternativeName>
</protein>
<organism>
    <name type="scientific">Homo sapiens</name>
    <name type="common">Human</name>
    <dbReference type="NCBI Taxonomy" id="9606"/>
    <lineage>
        <taxon>Eukaryota</taxon>
        <taxon>Metazoa</taxon>
        <taxon>Chordata</taxon>
        <taxon>Craniata</taxon>
        <taxon>Vertebrata</taxon>
        <taxon>Euteleostomi</taxon>
        <taxon>Mammalia</taxon>
        <taxon>Eutheria</taxon>
        <taxon>Euarchontoglires</taxon>
        <taxon>Primates</taxon>
        <taxon>Haplorrhini</taxon>
        <taxon>Catarrhini</taxon>
        <taxon>Hominidae</taxon>
        <taxon>Homo</taxon>
    </lineage>
</organism>